<dbReference type="EMBL" id="AJ223978">
    <property type="protein sequence ID" value="CAA11741.1"/>
    <property type="molecule type" value="Genomic_DNA"/>
</dbReference>
<dbReference type="EMBL" id="AL009126">
    <property type="protein sequence ID" value="CAB15302.1"/>
    <property type="molecule type" value="Genomic_DNA"/>
</dbReference>
<dbReference type="PIR" id="A70046">
    <property type="entry name" value="A70046"/>
</dbReference>
<dbReference type="RefSeq" id="NP_391192.1">
    <property type="nucleotide sequence ID" value="NC_000964.3"/>
</dbReference>
<dbReference type="RefSeq" id="WP_003243047.1">
    <property type="nucleotide sequence ID" value="NZ_OZ025638.1"/>
</dbReference>
<dbReference type="SMR" id="O32201"/>
<dbReference type="FunCoup" id="O32201">
    <property type="interactions" value="123"/>
</dbReference>
<dbReference type="STRING" id="224308.BSU33120"/>
<dbReference type="PaxDb" id="224308-BSU33120"/>
<dbReference type="EnsemblBacteria" id="CAB15302">
    <property type="protein sequence ID" value="CAB15302"/>
    <property type="gene ID" value="BSU_33120"/>
</dbReference>
<dbReference type="GeneID" id="938585"/>
<dbReference type="KEGG" id="bsu:BSU33120"/>
<dbReference type="PATRIC" id="fig|224308.179.peg.3590"/>
<dbReference type="eggNOG" id="COG1842">
    <property type="taxonomic scope" value="Bacteria"/>
</dbReference>
<dbReference type="InParanoid" id="O32201"/>
<dbReference type="OrthoDB" id="9779630at2"/>
<dbReference type="PhylomeDB" id="O32201"/>
<dbReference type="BioCyc" id="BSUB:BSU33120-MONOMER"/>
<dbReference type="Proteomes" id="UP000001570">
    <property type="component" value="Chromosome"/>
</dbReference>
<dbReference type="InterPro" id="IPR007157">
    <property type="entry name" value="PspA_VIPP1"/>
</dbReference>
<dbReference type="NCBIfam" id="NF045984">
    <property type="entry name" value="StressProtLiaH"/>
    <property type="match status" value="1"/>
</dbReference>
<dbReference type="PANTHER" id="PTHR31088">
    <property type="entry name" value="MEMBRANE-ASSOCIATED PROTEIN VIPP1, CHLOROPLASTIC"/>
    <property type="match status" value="1"/>
</dbReference>
<dbReference type="PANTHER" id="PTHR31088:SF6">
    <property type="entry name" value="PHAGE SHOCK PROTEIN A"/>
    <property type="match status" value="1"/>
</dbReference>
<dbReference type="Pfam" id="PF04012">
    <property type="entry name" value="PspA_IM30"/>
    <property type="match status" value="1"/>
</dbReference>
<evidence type="ECO:0000255" key="1"/>
<evidence type="ECO:0000269" key="2">
    <source>
    </source>
</evidence>
<evidence type="ECO:0000269" key="3">
    <source>
    </source>
</evidence>
<evidence type="ECO:0000269" key="4">
    <source>
    </source>
</evidence>
<evidence type="ECO:0000269" key="5">
    <source>
    </source>
</evidence>
<evidence type="ECO:0000269" key="6">
    <source>
    </source>
</evidence>
<evidence type="ECO:0000305" key="7"/>
<organism>
    <name type="scientific">Bacillus subtilis (strain 168)</name>
    <dbReference type="NCBI Taxonomy" id="224308"/>
    <lineage>
        <taxon>Bacteria</taxon>
        <taxon>Bacillati</taxon>
        <taxon>Bacillota</taxon>
        <taxon>Bacilli</taxon>
        <taxon>Bacillales</taxon>
        <taxon>Bacillaceae</taxon>
        <taxon>Bacillus</taxon>
    </lineage>
</organism>
<feature type="chain" id="PRO_0000166295" description="Protein LiaH">
    <location>
        <begin position="1"/>
        <end position="225"/>
    </location>
</feature>
<feature type="coiled-coil region" evidence="1">
    <location>
        <begin position="58"/>
        <end position="151"/>
    </location>
</feature>
<feature type="coiled-coil region" evidence="1">
    <location>
        <begin position="161"/>
        <end position="182"/>
    </location>
</feature>
<accession>O32201</accession>
<protein>
    <recommendedName>
        <fullName>Protein LiaH</fullName>
    </recommendedName>
</protein>
<gene>
    <name type="primary">liaH</name>
    <name type="synonym">yvqH</name>
    <name type="ordered locus">BSU33120</name>
</gene>
<reference key="1">
    <citation type="journal article" date="1998" name="Microbiology">
        <title>The yvsA-yvqA (293 degrees - 289 degrees) region of the Bacillus subtilis chromosome containing genes involved in metal ion uptake and a putative sigma factor.</title>
        <authorList>
            <person name="Wipat A."/>
            <person name="Brignell C.S."/>
            <person name="Guy J.B."/>
            <person name="Rose M."/>
            <person name="Emmerson P.T."/>
            <person name="Harwood C.R."/>
        </authorList>
    </citation>
    <scope>NUCLEOTIDE SEQUENCE [GENOMIC DNA]</scope>
    <source>
        <strain>168</strain>
    </source>
</reference>
<reference key="2">
    <citation type="journal article" date="1997" name="Nature">
        <title>The complete genome sequence of the Gram-positive bacterium Bacillus subtilis.</title>
        <authorList>
            <person name="Kunst F."/>
            <person name="Ogasawara N."/>
            <person name="Moszer I."/>
            <person name="Albertini A.M."/>
            <person name="Alloni G."/>
            <person name="Azevedo V."/>
            <person name="Bertero M.G."/>
            <person name="Bessieres P."/>
            <person name="Bolotin A."/>
            <person name="Borchert S."/>
            <person name="Borriss R."/>
            <person name="Boursier L."/>
            <person name="Brans A."/>
            <person name="Braun M."/>
            <person name="Brignell S.C."/>
            <person name="Bron S."/>
            <person name="Brouillet S."/>
            <person name="Bruschi C.V."/>
            <person name="Caldwell B."/>
            <person name="Capuano V."/>
            <person name="Carter N.M."/>
            <person name="Choi S.-K."/>
            <person name="Codani J.-J."/>
            <person name="Connerton I.F."/>
            <person name="Cummings N.J."/>
            <person name="Daniel R.A."/>
            <person name="Denizot F."/>
            <person name="Devine K.M."/>
            <person name="Duesterhoeft A."/>
            <person name="Ehrlich S.D."/>
            <person name="Emmerson P.T."/>
            <person name="Entian K.-D."/>
            <person name="Errington J."/>
            <person name="Fabret C."/>
            <person name="Ferrari E."/>
            <person name="Foulger D."/>
            <person name="Fritz C."/>
            <person name="Fujita M."/>
            <person name="Fujita Y."/>
            <person name="Fuma S."/>
            <person name="Galizzi A."/>
            <person name="Galleron N."/>
            <person name="Ghim S.-Y."/>
            <person name="Glaser P."/>
            <person name="Goffeau A."/>
            <person name="Golightly E.J."/>
            <person name="Grandi G."/>
            <person name="Guiseppi G."/>
            <person name="Guy B.J."/>
            <person name="Haga K."/>
            <person name="Haiech J."/>
            <person name="Harwood C.R."/>
            <person name="Henaut A."/>
            <person name="Hilbert H."/>
            <person name="Holsappel S."/>
            <person name="Hosono S."/>
            <person name="Hullo M.-F."/>
            <person name="Itaya M."/>
            <person name="Jones L.-M."/>
            <person name="Joris B."/>
            <person name="Karamata D."/>
            <person name="Kasahara Y."/>
            <person name="Klaerr-Blanchard M."/>
            <person name="Klein C."/>
            <person name="Kobayashi Y."/>
            <person name="Koetter P."/>
            <person name="Koningstein G."/>
            <person name="Krogh S."/>
            <person name="Kumano M."/>
            <person name="Kurita K."/>
            <person name="Lapidus A."/>
            <person name="Lardinois S."/>
            <person name="Lauber J."/>
            <person name="Lazarevic V."/>
            <person name="Lee S.-M."/>
            <person name="Levine A."/>
            <person name="Liu H."/>
            <person name="Masuda S."/>
            <person name="Mauel C."/>
            <person name="Medigue C."/>
            <person name="Medina N."/>
            <person name="Mellado R.P."/>
            <person name="Mizuno M."/>
            <person name="Moestl D."/>
            <person name="Nakai S."/>
            <person name="Noback M."/>
            <person name="Noone D."/>
            <person name="O'Reilly M."/>
            <person name="Ogawa K."/>
            <person name="Ogiwara A."/>
            <person name="Oudega B."/>
            <person name="Park S.-H."/>
            <person name="Parro V."/>
            <person name="Pohl T.M."/>
            <person name="Portetelle D."/>
            <person name="Porwollik S."/>
            <person name="Prescott A.M."/>
            <person name="Presecan E."/>
            <person name="Pujic P."/>
            <person name="Purnelle B."/>
            <person name="Rapoport G."/>
            <person name="Rey M."/>
            <person name="Reynolds S."/>
            <person name="Rieger M."/>
            <person name="Rivolta C."/>
            <person name="Rocha E."/>
            <person name="Roche B."/>
            <person name="Rose M."/>
            <person name="Sadaie Y."/>
            <person name="Sato T."/>
            <person name="Scanlan E."/>
            <person name="Schleich S."/>
            <person name="Schroeter R."/>
            <person name="Scoffone F."/>
            <person name="Sekiguchi J."/>
            <person name="Sekowska A."/>
            <person name="Seror S.J."/>
            <person name="Serror P."/>
            <person name="Shin B.-S."/>
            <person name="Soldo B."/>
            <person name="Sorokin A."/>
            <person name="Tacconi E."/>
            <person name="Takagi T."/>
            <person name="Takahashi H."/>
            <person name="Takemaru K."/>
            <person name="Takeuchi M."/>
            <person name="Tamakoshi A."/>
            <person name="Tanaka T."/>
            <person name="Terpstra P."/>
            <person name="Tognoni A."/>
            <person name="Tosato V."/>
            <person name="Uchiyama S."/>
            <person name="Vandenbol M."/>
            <person name="Vannier F."/>
            <person name="Vassarotti A."/>
            <person name="Viari A."/>
            <person name="Wambutt R."/>
            <person name="Wedler E."/>
            <person name="Wedler H."/>
            <person name="Weitzenegger T."/>
            <person name="Winters P."/>
            <person name="Wipat A."/>
            <person name="Yamamoto H."/>
            <person name="Yamane K."/>
            <person name="Yasumoto K."/>
            <person name="Yata K."/>
            <person name="Yoshida K."/>
            <person name="Yoshikawa H.-F."/>
            <person name="Zumstein E."/>
            <person name="Yoshikawa H."/>
            <person name="Danchin A."/>
        </authorList>
    </citation>
    <scope>NUCLEOTIDE SEQUENCE [LARGE SCALE GENOMIC DNA]</scope>
    <source>
        <strain>168</strain>
    </source>
</reference>
<reference key="3">
    <citation type="journal article" date="2002" name="Mol. Microbiol.">
        <title>Antibiotics that inhibit cell wall biosynthesis induce expression of the Bacillus subtilis sigma(W) and sigma(M) regulons.</title>
        <authorList>
            <person name="Cao M."/>
            <person name="Wang T."/>
            <person name="Ye R."/>
            <person name="Helmann J.D."/>
        </authorList>
    </citation>
    <scope>INDUCTION BY VANCOMYCIN</scope>
    <source>
        <strain>168 / CU1065</strain>
    </source>
</reference>
<reference key="4">
    <citation type="journal article" date="2003" name="Mol. Microbiol.">
        <title>Cell wall stress responses in Bacillus subtilis: the regulatory network of the bacitracin stimulon.</title>
        <authorList>
            <person name="Mascher T."/>
            <person name="Margulis N.G."/>
            <person name="Wang T."/>
            <person name="Ye R.W."/>
            <person name="Helmann J.D."/>
        </authorList>
    </citation>
    <scope>INDUCTION BY BACITRACIN</scope>
    <source>
        <strain>168 / CU1065</strain>
    </source>
</reference>
<reference key="5">
    <citation type="journal article" date="2004" name="Antimicrob. Agents Chemother.">
        <title>Antibiotic-inducible promoter regulated by the cell envelope stress-sensing two-component system LiaRS of Bacillus subtilis.</title>
        <authorList>
            <person name="Mascher T."/>
            <person name="Zimmer S.L."/>
            <person name="Smith T.-A."/>
            <person name="Helmann J.D."/>
        </authorList>
    </citation>
    <scope>INDUCTION BY ANTIBIOTICS</scope>
</reference>
<reference key="6">
    <citation type="journal article" date="2005" name="Appl. Microbiol. Biotechnol.">
        <title>Transcriptome analysis of the secretion stress response of Bacillus subtilis.</title>
        <authorList>
            <person name="Hyyrylaeinen H.-L."/>
            <person name="Sarvas M."/>
            <person name="Kontinen V.P."/>
        </authorList>
    </citation>
    <scope>INDUCTION BY STRESS</scope>
</reference>
<reference key="7">
    <citation type="journal article" date="2005" name="Microbiology">
        <title>Cationic antimicrobial peptides elicit a complex stress response in Bacillus subtilis that involves ECF-type sigma factors and two-component signal transduction systems.</title>
        <authorList>
            <person name="Pietiaeinen M."/>
            <person name="Gardemeister M."/>
            <person name="Mecklin M."/>
            <person name="Leskelae S."/>
            <person name="Sarvas M."/>
            <person name="Kontinen V.P."/>
        </authorList>
    </citation>
    <scope>INDUCTION BY LL-37; PG-1 AND TRITON X-100</scope>
    <source>
        <strain>168</strain>
    </source>
</reference>
<comment type="induction">
    <text evidence="2 3 4 5 6">Induced, via the two-component regulatory system LiaS/LiaR, by antibiotics (vancomycin, bacitracin, nisin and ramoplanin), cationic antimicrobial peptides (human LL-37 and porcine PG-1), Triton X-100 and severe secretion stress.</text>
</comment>
<comment type="similarity">
    <text evidence="7">Belongs to the PspA/Vipp/IM30 family.</text>
</comment>
<proteinExistence type="evidence at transcript level"/>
<name>LIAH_BACSU</name>
<sequence length="225" mass="25698">MVLKRIRDMFVASVHEGLDKMENPKVMLNQYVRDMESDIAKAKQTIVKQHTIAYQFKKKYEEAAEVAGKRKNQAQLAFDAGEEELAKKALTEMKYLEGKAAEHKASYEQANSQLADLKEQLAALETKLQDVKDKKQALIARANAAKAKEHMNTTFDKIDSESAYREFLRIENRIEEMEIRANYSKSAEAGTELTRKEFADDVEAEIEKMRTLSLQKSDQTKAANE</sequence>
<keyword id="KW-0175">Coiled coil</keyword>
<keyword id="KW-1185">Reference proteome</keyword>